<feature type="chain" id="PRO_1000025916" description="RNA-binding protein Hfq">
    <location>
        <begin position="1"/>
        <end position="102"/>
    </location>
</feature>
<feature type="domain" description="Sm" evidence="2">
    <location>
        <begin position="9"/>
        <end position="68"/>
    </location>
</feature>
<feature type="region of interest" description="Disordered" evidence="3">
    <location>
        <begin position="63"/>
        <end position="102"/>
    </location>
</feature>
<feature type="compositionally biased region" description="Low complexity" evidence="3">
    <location>
        <begin position="70"/>
        <end position="86"/>
    </location>
</feature>
<evidence type="ECO:0000255" key="1">
    <source>
        <dbReference type="HAMAP-Rule" id="MF_00436"/>
    </source>
</evidence>
<evidence type="ECO:0000255" key="2">
    <source>
        <dbReference type="PROSITE-ProRule" id="PRU01346"/>
    </source>
</evidence>
<evidence type="ECO:0000256" key="3">
    <source>
        <dbReference type="SAM" id="MobiDB-lite"/>
    </source>
</evidence>
<keyword id="KW-0694">RNA-binding</keyword>
<keyword id="KW-0346">Stress response</keyword>
<sequence>MAKGQSLQDPFLNALRRERVPVSIYLVNGIKLQGQIESFDQFVILLKNTVSQMVYKHAISTVVPSRPVSHHSNNAGGGSSNYHHGGSAQGSSAPQQDSDDAE</sequence>
<gene>
    <name evidence="1" type="primary">hfq</name>
    <name type="ordered locus">KPN78578_44970</name>
    <name type="ORF">KPN_04570</name>
</gene>
<dbReference type="EMBL" id="CP000647">
    <property type="protein sequence ID" value="ABR79921.1"/>
    <property type="molecule type" value="Genomic_DNA"/>
</dbReference>
<dbReference type="RefSeq" id="WP_002885659.1">
    <property type="nucleotide sequence ID" value="NC_009648.1"/>
</dbReference>
<dbReference type="SMR" id="A6TH87"/>
<dbReference type="STRING" id="272620.KPN_04570"/>
<dbReference type="jPOST" id="A6TH87"/>
<dbReference type="PaxDb" id="272620-KPN_04570"/>
<dbReference type="EnsemblBacteria" id="ABR79921">
    <property type="protein sequence ID" value="ABR79921"/>
    <property type="gene ID" value="KPN_04570"/>
</dbReference>
<dbReference type="GeneID" id="93275424"/>
<dbReference type="KEGG" id="kpn:KPN_04570"/>
<dbReference type="HOGENOM" id="CLU_113688_2_1_6"/>
<dbReference type="Proteomes" id="UP000000265">
    <property type="component" value="Chromosome"/>
</dbReference>
<dbReference type="GO" id="GO:0005829">
    <property type="term" value="C:cytosol"/>
    <property type="evidence" value="ECO:0007669"/>
    <property type="project" value="TreeGrafter"/>
</dbReference>
<dbReference type="GO" id="GO:0003723">
    <property type="term" value="F:RNA binding"/>
    <property type="evidence" value="ECO:0007669"/>
    <property type="project" value="UniProtKB-UniRule"/>
</dbReference>
<dbReference type="GO" id="GO:0006355">
    <property type="term" value="P:regulation of DNA-templated transcription"/>
    <property type="evidence" value="ECO:0007669"/>
    <property type="project" value="InterPro"/>
</dbReference>
<dbReference type="GO" id="GO:0043487">
    <property type="term" value="P:regulation of RNA stability"/>
    <property type="evidence" value="ECO:0007669"/>
    <property type="project" value="TreeGrafter"/>
</dbReference>
<dbReference type="GO" id="GO:0045974">
    <property type="term" value="P:regulation of translation, ncRNA-mediated"/>
    <property type="evidence" value="ECO:0007669"/>
    <property type="project" value="TreeGrafter"/>
</dbReference>
<dbReference type="CDD" id="cd01716">
    <property type="entry name" value="Hfq"/>
    <property type="match status" value="1"/>
</dbReference>
<dbReference type="FunFam" id="2.30.30.100:FF:000001">
    <property type="entry name" value="RNA-binding protein Hfq"/>
    <property type="match status" value="1"/>
</dbReference>
<dbReference type="Gene3D" id="2.30.30.100">
    <property type="match status" value="1"/>
</dbReference>
<dbReference type="HAMAP" id="MF_00436">
    <property type="entry name" value="Hfq"/>
    <property type="match status" value="1"/>
</dbReference>
<dbReference type="InterPro" id="IPR005001">
    <property type="entry name" value="Hfq"/>
</dbReference>
<dbReference type="InterPro" id="IPR010920">
    <property type="entry name" value="LSM_dom_sf"/>
</dbReference>
<dbReference type="InterPro" id="IPR047575">
    <property type="entry name" value="Sm"/>
</dbReference>
<dbReference type="NCBIfam" id="TIGR02383">
    <property type="entry name" value="Hfq"/>
    <property type="match status" value="1"/>
</dbReference>
<dbReference type="NCBIfam" id="NF001602">
    <property type="entry name" value="PRK00395.1"/>
    <property type="match status" value="1"/>
</dbReference>
<dbReference type="PANTHER" id="PTHR34772">
    <property type="entry name" value="RNA-BINDING PROTEIN HFQ"/>
    <property type="match status" value="1"/>
</dbReference>
<dbReference type="PANTHER" id="PTHR34772:SF1">
    <property type="entry name" value="RNA-BINDING PROTEIN HFQ"/>
    <property type="match status" value="1"/>
</dbReference>
<dbReference type="Pfam" id="PF17209">
    <property type="entry name" value="Hfq"/>
    <property type="match status" value="1"/>
</dbReference>
<dbReference type="SUPFAM" id="SSF50182">
    <property type="entry name" value="Sm-like ribonucleoproteins"/>
    <property type="match status" value="1"/>
</dbReference>
<dbReference type="PROSITE" id="PS52002">
    <property type="entry name" value="SM"/>
    <property type="match status" value="1"/>
</dbReference>
<comment type="function">
    <text evidence="1">RNA chaperone that binds small regulatory RNA (sRNAs) and mRNAs to facilitate mRNA translational regulation in response to envelope stress, environmental stress and changes in metabolite concentrations. Also binds with high specificity to tRNAs.</text>
</comment>
<comment type="subunit">
    <text evidence="1">Homohexamer.</text>
</comment>
<comment type="similarity">
    <text evidence="1">Belongs to the Hfq family.</text>
</comment>
<accession>A6TH87</accession>
<organism>
    <name type="scientific">Klebsiella pneumoniae subsp. pneumoniae (strain ATCC 700721 / MGH 78578)</name>
    <dbReference type="NCBI Taxonomy" id="272620"/>
    <lineage>
        <taxon>Bacteria</taxon>
        <taxon>Pseudomonadati</taxon>
        <taxon>Pseudomonadota</taxon>
        <taxon>Gammaproteobacteria</taxon>
        <taxon>Enterobacterales</taxon>
        <taxon>Enterobacteriaceae</taxon>
        <taxon>Klebsiella/Raoultella group</taxon>
        <taxon>Klebsiella</taxon>
        <taxon>Klebsiella pneumoniae complex</taxon>
    </lineage>
</organism>
<reference key="1">
    <citation type="submission" date="2006-09" db="EMBL/GenBank/DDBJ databases">
        <authorList>
            <consortium name="The Klebsiella pneumonia Genome Sequencing Project"/>
            <person name="McClelland M."/>
            <person name="Sanderson E.K."/>
            <person name="Spieth J."/>
            <person name="Clifton W.S."/>
            <person name="Latreille P."/>
            <person name="Sabo A."/>
            <person name="Pepin K."/>
            <person name="Bhonagiri V."/>
            <person name="Porwollik S."/>
            <person name="Ali J."/>
            <person name="Wilson R.K."/>
        </authorList>
    </citation>
    <scope>NUCLEOTIDE SEQUENCE [LARGE SCALE GENOMIC DNA]</scope>
    <source>
        <strain>ATCC 700721 / MGH 78578</strain>
    </source>
</reference>
<proteinExistence type="inferred from homology"/>
<name>HFQ_KLEP7</name>
<protein>
    <recommendedName>
        <fullName evidence="1">RNA-binding protein Hfq</fullName>
    </recommendedName>
</protein>